<protein>
    <recommendedName>
        <fullName>S-layer protein</fullName>
    </recommendedName>
    <alternativeName>
        <fullName>Surface layer protein</fullName>
    </alternativeName>
</protein>
<name>SLAP_BACTG</name>
<feature type="chain" id="PRO_0000205334" description="S-layer protein">
    <location>
        <begin position="1"/>
        <end position="10" status="greater than"/>
    </location>
</feature>
<feature type="non-terminal residue">
    <location>
        <position position="10"/>
    </location>
</feature>
<sequence length="10" mass="1083">XGKTFPDVXP</sequence>
<keyword id="KW-0134">Cell wall</keyword>
<keyword id="KW-0903">Direct protein sequencing</keyword>
<keyword id="KW-0701">S-layer</keyword>
<keyword id="KW-0964">Secreted</keyword>
<organism>
    <name type="scientific">Bacillus thuringiensis subsp. galleriae</name>
    <dbReference type="NCBI Taxonomy" id="29338"/>
    <lineage>
        <taxon>Bacteria</taxon>
        <taxon>Bacillati</taxon>
        <taxon>Bacillota</taxon>
        <taxon>Bacilli</taxon>
        <taxon>Bacillales</taxon>
        <taxon>Bacillaceae</taxon>
        <taxon>Bacillus</taxon>
        <taxon>Bacillus cereus group</taxon>
    </lineage>
</organism>
<reference key="1">
    <citation type="journal article" date="1989" name="J. Bacteriol.">
        <title>Characterization of a dynamic S layer on Bacillus thuringiensis.</title>
        <authorList>
            <person name="Luckevich M.D."/>
            <person name="Beveridge T.J."/>
        </authorList>
    </citation>
    <scope>PROTEIN SEQUENCE</scope>
    <source>
        <strain>NRRL 4045</strain>
    </source>
</reference>
<dbReference type="PIR" id="A60476">
    <property type="entry name" value="A60476"/>
</dbReference>
<dbReference type="GO" id="GO:0005576">
    <property type="term" value="C:extracellular region"/>
    <property type="evidence" value="ECO:0007669"/>
    <property type="project" value="UniProtKB-KW"/>
</dbReference>
<dbReference type="GO" id="GO:0030115">
    <property type="term" value="C:S-layer"/>
    <property type="evidence" value="ECO:0007669"/>
    <property type="project" value="UniProtKB-SubCell"/>
</dbReference>
<accession>P49325</accession>
<proteinExistence type="evidence at protein level"/>
<comment type="function">
    <text>The S-layer is a paracrystalline mono-layered assembly of proteins which coat the surface of bacteria.</text>
</comment>
<comment type="subcellular location">
    <subcellularLocation>
        <location>Secreted</location>
        <location>Cell wall</location>
        <location>S-layer</location>
    </subcellularLocation>
    <text>This bacterium is covered by a S-layer with oblique (p2) symmetry.</text>
</comment>